<organism>
    <name type="scientific">Prochlorococcus marinus (strain SARG / CCMP1375 / SS120)</name>
    <dbReference type="NCBI Taxonomy" id="167539"/>
    <lineage>
        <taxon>Bacteria</taxon>
        <taxon>Bacillati</taxon>
        <taxon>Cyanobacteriota</taxon>
        <taxon>Cyanophyceae</taxon>
        <taxon>Synechococcales</taxon>
        <taxon>Prochlorococcaceae</taxon>
        <taxon>Prochlorococcus</taxon>
    </lineage>
</organism>
<keyword id="KW-0028">Amino-acid biosynthesis</keyword>
<keyword id="KW-0057">Aromatic amino acid biosynthesis</keyword>
<keyword id="KW-0274">FAD</keyword>
<keyword id="KW-0285">Flavoprotein</keyword>
<keyword id="KW-0288">FMN</keyword>
<keyword id="KW-0456">Lyase</keyword>
<keyword id="KW-0521">NADP</keyword>
<keyword id="KW-1185">Reference proteome</keyword>
<gene>
    <name evidence="1" type="primary">aroC</name>
    <name type="ordered locus">Pro_0253</name>
</gene>
<evidence type="ECO:0000255" key="1">
    <source>
        <dbReference type="HAMAP-Rule" id="MF_00300"/>
    </source>
</evidence>
<evidence type="ECO:0000305" key="2"/>
<dbReference type="EC" id="4.2.3.5" evidence="1"/>
<dbReference type="EMBL" id="AE017126">
    <property type="protein sequence ID" value="AAP99299.1"/>
    <property type="molecule type" value="Genomic_DNA"/>
</dbReference>
<dbReference type="EMBL" id="Z49201">
    <property type="protein sequence ID" value="CAA89063.1"/>
    <property type="molecule type" value="Genomic_DNA"/>
</dbReference>
<dbReference type="RefSeq" id="NP_874647.1">
    <property type="nucleotide sequence ID" value="NC_005042.1"/>
</dbReference>
<dbReference type="RefSeq" id="WP_011124408.1">
    <property type="nucleotide sequence ID" value="NC_005042.1"/>
</dbReference>
<dbReference type="SMR" id="P46894"/>
<dbReference type="STRING" id="167539.Pro_0253"/>
<dbReference type="EnsemblBacteria" id="AAP99299">
    <property type="protein sequence ID" value="AAP99299"/>
    <property type="gene ID" value="Pro_0253"/>
</dbReference>
<dbReference type="KEGG" id="pma:Pro_0253"/>
<dbReference type="PATRIC" id="fig|167539.5.peg.261"/>
<dbReference type="eggNOG" id="COG0082">
    <property type="taxonomic scope" value="Bacteria"/>
</dbReference>
<dbReference type="HOGENOM" id="CLU_034547_0_1_3"/>
<dbReference type="OrthoDB" id="9771806at2"/>
<dbReference type="UniPathway" id="UPA00053">
    <property type="reaction ID" value="UER00090"/>
</dbReference>
<dbReference type="Proteomes" id="UP000001420">
    <property type="component" value="Chromosome"/>
</dbReference>
<dbReference type="GO" id="GO:0005829">
    <property type="term" value="C:cytosol"/>
    <property type="evidence" value="ECO:0007669"/>
    <property type="project" value="TreeGrafter"/>
</dbReference>
<dbReference type="GO" id="GO:0004107">
    <property type="term" value="F:chorismate synthase activity"/>
    <property type="evidence" value="ECO:0007669"/>
    <property type="project" value="UniProtKB-UniRule"/>
</dbReference>
<dbReference type="GO" id="GO:0010181">
    <property type="term" value="F:FMN binding"/>
    <property type="evidence" value="ECO:0007669"/>
    <property type="project" value="TreeGrafter"/>
</dbReference>
<dbReference type="GO" id="GO:0008652">
    <property type="term" value="P:amino acid biosynthetic process"/>
    <property type="evidence" value="ECO:0007669"/>
    <property type="project" value="UniProtKB-KW"/>
</dbReference>
<dbReference type="GO" id="GO:0009073">
    <property type="term" value="P:aromatic amino acid family biosynthetic process"/>
    <property type="evidence" value="ECO:0007669"/>
    <property type="project" value="UniProtKB-KW"/>
</dbReference>
<dbReference type="GO" id="GO:0009423">
    <property type="term" value="P:chorismate biosynthetic process"/>
    <property type="evidence" value="ECO:0007669"/>
    <property type="project" value="UniProtKB-UniRule"/>
</dbReference>
<dbReference type="CDD" id="cd07304">
    <property type="entry name" value="Chorismate_synthase"/>
    <property type="match status" value="1"/>
</dbReference>
<dbReference type="FunFam" id="3.60.150.10:FF:000003">
    <property type="entry name" value="Chorismate synthase"/>
    <property type="match status" value="1"/>
</dbReference>
<dbReference type="Gene3D" id="3.60.150.10">
    <property type="entry name" value="Chorismate synthase AroC"/>
    <property type="match status" value="1"/>
</dbReference>
<dbReference type="HAMAP" id="MF_00300">
    <property type="entry name" value="Chorismate_synth"/>
    <property type="match status" value="1"/>
</dbReference>
<dbReference type="InterPro" id="IPR000453">
    <property type="entry name" value="Chorismate_synth"/>
</dbReference>
<dbReference type="InterPro" id="IPR035904">
    <property type="entry name" value="Chorismate_synth_AroC_sf"/>
</dbReference>
<dbReference type="InterPro" id="IPR020541">
    <property type="entry name" value="Chorismate_synthase_CS"/>
</dbReference>
<dbReference type="NCBIfam" id="TIGR00033">
    <property type="entry name" value="aroC"/>
    <property type="match status" value="1"/>
</dbReference>
<dbReference type="NCBIfam" id="NF003793">
    <property type="entry name" value="PRK05382.1"/>
    <property type="match status" value="1"/>
</dbReference>
<dbReference type="PANTHER" id="PTHR21085">
    <property type="entry name" value="CHORISMATE SYNTHASE"/>
    <property type="match status" value="1"/>
</dbReference>
<dbReference type="PANTHER" id="PTHR21085:SF0">
    <property type="entry name" value="CHORISMATE SYNTHASE"/>
    <property type="match status" value="1"/>
</dbReference>
<dbReference type="Pfam" id="PF01264">
    <property type="entry name" value="Chorismate_synt"/>
    <property type="match status" value="1"/>
</dbReference>
<dbReference type="PIRSF" id="PIRSF001456">
    <property type="entry name" value="Chorismate_synth"/>
    <property type="match status" value="1"/>
</dbReference>
<dbReference type="SUPFAM" id="SSF103263">
    <property type="entry name" value="Chorismate synthase, AroC"/>
    <property type="match status" value="1"/>
</dbReference>
<dbReference type="PROSITE" id="PS00787">
    <property type="entry name" value="CHORISMATE_SYNTHASE_1"/>
    <property type="match status" value="1"/>
</dbReference>
<dbReference type="PROSITE" id="PS00788">
    <property type="entry name" value="CHORISMATE_SYNTHASE_2"/>
    <property type="match status" value="1"/>
</dbReference>
<dbReference type="PROSITE" id="PS00789">
    <property type="entry name" value="CHORISMATE_SYNTHASE_3"/>
    <property type="match status" value="1"/>
</dbReference>
<reference key="1">
    <citation type="journal article" date="2003" name="Proc. Natl. Acad. Sci. U.S.A.">
        <title>Genome sequence of the cyanobacterium Prochlorococcus marinus SS120, a nearly minimal oxyphototrophic genome.</title>
        <authorList>
            <person name="Dufresne A."/>
            <person name="Salanoubat M."/>
            <person name="Partensky F."/>
            <person name="Artiguenave F."/>
            <person name="Axmann I.M."/>
            <person name="Barbe V."/>
            <person name="Duprat S."/>
            <person name="Galperin M.Y."/>
            <person name="Koonin E.V."/>
            <person name="Le Gall F."/>
            <person name="Makarova K.S."/>
            <person name="Ostrowski M."/>
            <person name="Oztas S."/>
            <person name="Robert C."/>
            <person name="Rogozin I.B."/>
            <person name="Scanlan D.J."/>
            <person name="Tandeau de Marsac N."/>
            <person name="Weissenbach J."/>
            <person name="Wincker P."/>
            <person name="Wolf Y.I."/>
            <person name="Hess W.R."/>
        </authorList>
    </citation>
    <scope>NUCLEOTIDE SEQUENCE [LARGE SCALE GENOMIC DNA]</scope>
    <source>
        <strain>SARG / CCMP1375 / SS120</strain>
    </source>
</reference>
<reference key="2">
    <citation type="journal article" date="1995" name="Plant Mol. Biol.">
        <title>Characterization of the single psbA gene of Prochlorococcus marinus CCMP 1375 (Prochlorophyta).</title>
        <authorList>
            <person name="Hess W.R."/>
            <person name="Weihe A."/>
            <person name="Loiseaux-De Goer S."/>
            <person name="Partensky F."/>
            <person name="Vaulot D."/>
        </authorList>
    </citation>
    <scope>NUCLEOTIDE SEQUENCE [GENOMIC DNA] OF 1-52</scope>
    <source>
        <strain>SARG / CCMP1375 / SS120</strain>
    </source>
</reference>
<name>AROC_PROMA</name>
<proteinExistence type="inferred from homology"/>
<sequence length="362" mass="39429">MGSSFGDLFRVSTFGESHGGSVGVIVEGCPPRLEIDLEKIQEELDRRRPGQSKITTPRKELDQVEILSGIANRETLGTPIAMIVRNRDQRPSDYKEMKNIFRPSHADGTYHLKYGIQAPSGGGRASARETIGRVAAGAIAKQLLQKVQNTQILAWVKRIHNIEAEIDINTIGFADIESNIVRCPNQDVAKLMIQRIEEISRDGDSCGGLIECVVRNVPAGLGMPVFDKLEADLSKALMSLPATKGFEVGSGFRGTFLKGSEHNDAFIAGDKNRLRTATNNSGGIQGGISNGEPIILRVGFKPTATIRKDQQTIDSEGKQITLASKGRHDPCVLPRAVPMVEAMVSIVLADHLLRQRGQCSLW</sequence>
<feature type="chain" id="PRO_0000140628" description="Chorismate synthase">
    <location>
        <begin position="1"/>
        <end position="362"/>
    </location>
</feature>
<feature type="binding site" evidence="1">
    <location>
        <position position="47"/>
    </location>
    <ligand>
        <name>NADP(+)</name>
        <dbReference type="ChEBI" id="CHEBI:58349"/>
    </ligand>
</feature>
<feature type="binding site" evidence="1">
    <location>
        <begin position="124"/>
        <end position="126"/>
    </location>
    <ligand>
        <name>FMN</name>
        <dbReference type="ChEBI" id="CHEBI:58210"/>
    </ligand>
</feature>
<feature type="binding site" evidence="1">
    <location>
        <position position="286"/>
    </location>
    <ligand>
        <name>FMN</name>
        <dbReference type="ChEBI" id="CHEBI:58210"/>
    </ligand>
</feature>
<feature type="binding site" evidence="1">
    <location>
        <begin position="301"/>
        <end position="305"/>
    </location>
    <ligand>
        <name>FMN</name>
        <dbReference type="ChEBI" id="CHEBI:58210"/>
    </ligand>
</feature>
<feature type="binding site" evidence="1">
    <location>
        <position position="327"/>
    </location>
    <ligand>
        <name>FMN</name>
        <dbReference type="ChEBI" id="CHEBI:58210"/>
    </ligand>
</feature>
<feature type="sequence conflict" description="In Ref. 2; CAA89063." evidence="2" ref="2">
    <original>PGQS</original>
    <variation>RQQR</variation>
    <location>
        <begin position="49"/>
        <end position="52"/>
    </location>
</feature>
<comment type="function">
    <text evidence="1">Catalyzes the anti-1,4-elimination of the C-3 phosphate and the C-6 proR hydrogen from 5-enolpyruvylshikimate-3-phosphate (EPSP) to yield chorismate, which is the branch point compound that serves as the starting substrate for the three terminal pathways of aromatic amino acid biosynthesis. This reaction introduces a second double bond into the aromatic ring system.</text>
</comment>
<comment type="catalytic activity">
    <reaction evidence="1">
        <text>5-O-(1-carboxyvinyl)-3-phosphoshikimate = chorismate + phosphate</text>
        <dbReference type="Rhea" id="RHEA:21020"/>
        <dbReference type="ChEBI" id="CHEBI:29748"/>
        <dbReference type="ChEBI" id="CHEBI:43474"/>
        <dbReference type="ChEBI" id="CHEBI:57701"/>
        <dbReference type="EC" id="4.2.3.5"/>
    </reaction>
</comment>
<comment type="cofactor">
    <cofactor evidence="1">
        <name>FMNH2</name>
        <dbReference type="ChEBI" id="CHEBI:57618"/>
    </cofactor>
    <text evidence="1">Reduced FMN (FMNH(2)).</text>
</comment>
<comment type="pathway">
    <text evidence="1">Metabolic intermediate biosynthesis; chorismate biosynthesis; chorismate from D-erythrose 4-phosphate and phosphoenolpyruvate: step 7/7.</text>
</comment>
<comment type="subunit">
    <text evidence="1">Homotetramer.</text>
</comment>
<comment type="similarity">
    <text evidence="1">Belongs to the chorismate synthase family.</text>
</comment>
<accession>P46894</accession>
<protein>
    <recommendedName>
        <fullName evidence="1">Chorismate synthase</fullName>
        <shortName evidence="1">CS</shortName>
        <ecNumber evidence="1">4.2.3.5</ecNumber>
    </recommendedName>
    <alternativeName>
        <fullName evidence="1">5-enolpyruvylshikimate-3-phosphate phospholyase</fullName>
    </alternativeName>
</protein>